<gene>
    <name evidence="1" type="primary">psaB</name>
</gene>
<keyword id="KW-0004">4Fe-4S</keyword>
<keyword id="KW-0148">Chlorophyll</keyword>
<keyword id="KW-0150">Chloroplast</keyword>
<keyword id="KW-0157">Chromophore</keyword>
<keyword id="KW-0249">Electron transport</keyword>
<keyword id="KW-0408">Iron</keyword>
<keyword id="KW-0411">Iron-sulfur</keyword>
<keyword id="KW-0460">Magnesium</keyword>
<keyword id="KW-0472">Membrane</keyword>
<keyword id="KW-0479">Metal-binding</keyword>
<keyword id="KW-0560">Oxidoreductase</keyword>
<keyword id="KW-0602">Photosynthesis</keyword>
<keyword id="KW-0603">Photosystem I</keyword>
<keyword id="KW-0934">Plastid</keyword>
<keyword id="KW-0793">Thylakoid</keyword>
<keyword id="KW-0812">Transmembrane</keyword>
<keyword id="KW-1133">Transmembrane helix</keyword>
<keyword id="KW-0813">Transport</keyword>
<geneLocation type="chloroplast"/>
<name>PSAB_MESVI</name>
<comment type="function">
    <text evidence="1">PsaA and PsaB bind P700, the primary electron donor of photosystem I (PSI), as well as the electron acceptors A0, A1 and FX. PSI is a plastocyanin-ferredoxin oxidoreductase, converting photonic excitation into a charge separation, which transfers an electron from the donor P700 chlorophyll pair to the spectroscopically characterized acceptors A0, A1, FX, FA and FB in turn. Oxidized P700 is reduced on the lumenal side of the thylakoid membrane by plastocyanin.</text>
</comment>
<comment type="catalytic activity">
    <reaction evidence="1">
        <text>reduced [plastocyanin] + hnu + oxidized [2Fe-2S]-[ferredoxin] = oxidized [plastocyanin] + reduced [2Fe-2S]-[ferredoxin]</text>
        <dbReference type="Rhea" id="RHEA:30407"/>
        <dbReference type="Rhea" id="RHEA-COMP:10000"/>
        <dbReference type="Rhea" id="RHEA-COMP:10001"/>
        <dbReference type="Rhea" id="RHEA-COMP:10039"/>
        <dbReference type="Rhea" id="RHEA-COMP:10040"/>
        <dbReference type="ChEBI" id="CHEBI:29036"/>
        <dbReference type="ChEBI" id="CHEBI:30212"/>
        <dbReference type="ChEBI" id="CHEBI:33737"/>
        <dbReference type="ChEBI" id="CHEBI:33738"/>
        <dbReference type="ChEBI" id="CHEBI:49552"/>
        <dbReference type="EC" id="1.97.1.12"/>
    </reaction>
</comment>
<comment type="cofactor">
    <text evidence="1">P700 is a chlorophyll a/chlorophyll a' dimer, A0 is one or more chlorophyll a, A1 is one or both phylloquinones and FX is a shared 4Fe-4S iron-sulfur center.</text>
</comment>
<comment type="subunit">
    <text evidence="1">The PsaA/B heterodimer binds the P700 chlorophyll special pair and subsequent electron acceptors. PSI consists of a core antenna complex that captures photons, and an electron transfer chain that converts photonic excitation into a charge separation. The eukaryotic PSI reaction center is composed of at least 11 subunits.</text>
</comment>
<comment type="subcellular location">
    <subcellularLocation>
        <location evidence="1">Plastid</location>
        <location evidence="1">Chloroplast thylakoid membrane</location>
        <topology evidence="1">Multi-pass membrane protein</topology>
    </subcellularLocation>
</comment>
<comment type="similarity">
    <text evidence="1">Belongs to the PsaA/PsaB family.</text>
</comment>
<accession>Q9MUR7</accession>
<sequence>MATKFPKFSQGLAQDPTTRRIWFGIATAHDFESHDGMTEENLYQKIFASHFGQLAIIFLWTSGNLFHVAWQGNFERWVADPLHVRPIAHAIWDPHFGQPAVEAFTRGGASGPVNISYSGVYQWWYTIGMRSNTDLYIGALFLLITASMTLFAGWLHLQPQFKPSLSWFKNAESRLNHHLSGLFGVSSLAWTGHLIHVAIPESRGQHVRWDNFLNVLPHPAGLSPFFTGNWAAYAQNPDSTSHIFSTSQGAGTAILTFLGGFHPQTQSLWLTDIAHHHLAIAVLFIVAGHMYRTNFGIGHSMREILEAQRPPGGRLGAGHSGLYDTVNNSLHFQLGLALASLGVITSVVAQHMYSLSPYAFLAQDFTTQAALYTHHQYIAGFIMTGAFAHGAIFFIRDYDPELNKDNVLARMLEHKEAIISHLSWASLFLGFHTLGLYVHNDVMQAFGTPEKQILIEPVFAQWIQASHGKSLYGFDVLLSSSSSFAASASDSIWLPGWLDAINSNSNSLFLTIGPGDFLVHHAIALGLHTTTLILVKGALDARGSKLMPDKKDFGYSFPCDGPGRGGTCDISAWDAFYLAVFWMLNTIGWVTFYWHWKHLTLWQGNVAQFDESSTYLMGWLRDYLWLNSSQLINGYNPFGMNSLSVWAWMFLFGHLIWATGFMFLISWRGYWQELIETLAWAHERTPLANLVRWKDKPVALSIVQARVVGLAHFSVGYVFTYAAFLIASTSGKFG</sequence>
<evidence type="ECO:0000255" key="1">
    <source>
        <dbReference type="HAMAP-Rule" id="MF_00482"/>
    </source>
</evidence>
<organism>
    <name type="scientific">Mesostigma viride</name>
    <name type="common">Green alga</name>
    <dbReference type="NCBI Taxonomy" id="41882"/>
    <lineage>
        <taxon>Eukaryota</taxon>
        <taxon>Viridiplantae</taxon>
        <taxon>Streptophyta</taxon>
        <taxon>Mesostigmatophyceae</taxon>
        <taxon>Mesostigmatales</taxon>
        <taxon>Mesostigmataceae</taxon>
        <taxon>Mesostigma</taxon>
    </lineage>
</organism>
<proteinExistence type="inferred from homology"/>
<feature type="chain" id="PRO_0000088622" description="Photosystem I P700 chlorophyll a apoprotein A2">
    <location>
        <begin position="1"/>
        <end position="734"/>
    </location>
</feature>
<feature type="transmembrane region" description="Helical; Name=I" evidence="1">
    <location>
        <begin position="46"/>
        <end position="69"/>
    </location>
</feature>
<feature type="transmembrane region" description="Helical; Name=II" evidence="1">
    <location>
        <begin position="135"/>
        <end position="158"/>
    </location>
</feature>
<feature type="transmembrane region" description="Helical; Name=III" evidence="1">
    <location>
        <begin position="175"/>
        <end position="199"/>
    </location>
</feature>
<feature type="transmembrane region" description="Helical; Name=IV" evidence="1">
    <location>
        <begin position="273"/>
        <end position="291"/>
    </location>
</feature>
<feature type="transmembrane region" description="Helical; Name=V" evidence="1">
    <location>
        <begin position="330"/>
        <end position="353"/>
    </location>
</feature>
<feature type="transmembrane region" description="Helical; Name=VI" evidence="1">
    <location>
        <begin position="369"/>
        <end position="395"/>
    </location>
</feature>
<feature type="transmembrane region" description="Helical; Name=VII" evidence="1">
    <location>
        <begin position="417"/>
        <end position="439"/>
    </location>
</feature>
<feature type="transmembrane region" description="Helical; Name=VIII" evidence="1">
    <location>
        <begin position="517"/>
        <end position="535"/>
    </location>
</feature>
<feature type="transmembrane region" description="Helical; Name=IX" evidence="1">
    <location>
        <begin position="575"/>
        <end position="596"/>
    </location>
</feature>
<feature type="transmembrane region" description="Helical; Name=X" evidence="1">
    <location>
        <begin position="643"/>
        <end position="665"/>
    </location>
</feature>
<feature type="transmembrane region" description="Helical; Name=XI" evidence="1">
    <location>
        <begin position="707"/>
        <end position="727"/>
    </location>
</feature>
<feature type="binding site" evidence="1">
    <location>
        <position position="559"/>
    </location>
    <ligand>
        <name>[4Fe-4S] cluster</name>
        <dbReference type="ChEBI" id="CHEBI:49883"/>
        <note>ligand shared between dimeric partners</note>
    </ligand>
</feature>
<feature type="binding site" evidence="1">
    <location>
        <position position="568"/>
    </location>
    <ligand>
        <name>[4Fe-4S] cluster</name>
        <dbReference type="ChEBI" id="CHEBI:49883"/>
        <note>ligand shared between dimeric partners</note>
    </ligand>
</feature>
<feature type="binding site" description="axial binding residue" evidence="1">
    <location>
        <position position="654"/>
    </location>
    <ligand>
        <name>chlorophyll a</name>
        <dbReference type="ChEBI" id="CHEBI:58416"/>
        <label>B1</label>
    </ligand>
    <ligandPart>
        <name>Mg</name>
        <dbReference type="ChEBI" id="CHEBI:25107"/>
    </ligandPart>
</feature>
<feature type="binding site" description="axial binding residue" evidence="1">
    <location>
        <position position="662"/>
    </location>
    <ligand>
        <name>chlorophyll a</name>
        <dbReference type="ChEBI" id="CHEBI:58416"/>
        <label>B3</label>
    </ligand>
    <ligandPart>
        <name>Mg</name>
        <dbReference type="ChEBI" id="CHEBI:25107"/>
    </ligandPart>
</feature>
<feature type="binding site" evidence="1">
    <location>
        <position position="670"/>
    </location>
    <ligand>
        <name>chlorophyll a</name>
        <dbReference type="ChEBI" id="CHEBI:58416"/>
        <label>B3</label>
    </ligand>
</feature>
<feature type="binding site" evidence="1">
    <location>
        <position position="671"/>
    </location>
    <ligand>
        <name>phylloquinone</name>
        <dbReference type="ChEBI" id="CHEBI:18067"/>
        <label>B</label>
    </ligand>
</feature>
<dbReference type="EC" id="1.97.1.12" evidence="1"/>
<dbReference type="EMBL" id="AF166114">
    <property type="protein sequence ID" value="AAF43834.1"/>
    <property type="molecule type" value="Genomic_DNA"/>
</dbReference>
<dbReference type="RefSeq" id="NP_038393.1">
    <property type="nucleotide sequence ID" value="NC_002186.1"/>
</dbReference>
<dbReference type="SMR" id="Q9MUR7"/>
<dbReference type="GeneID" id="800945"/>
<dbReference type="GO" id="GO:0009535">
    <property type="term" value="C:chloroplast thylakoid membrane"/>
    <property type="evidence" value="ECO:0007669"/>
    <property type="project" value="UniProtKB-SubCell"/>
</dbReference>
<dbReference type="GO" id="GO:0009522">
    <property type="term" value="C:photosystem I"/>
    <property type="evidence" value="ECO:0007669"/>
    <property type="project" value="UniProtKB-KW"/>
</dbReference>
<dbReference type="GO" id="GO:0051539">
    <property type="term" value="F:4 iron, 4 sulfur cluster binding"/>
    <property type="evidence" value="ECO:0007669"/>
    <property type="project" value="UniProtKB-KW"/>
</dbReference>
<dbReference type="GO" id="GO:0016168">
    <property type="term" value="F:chlorophyll binding"/>
    <property type="evidence" value="ECO:0007669"/>
    <property type="project" value="UniProtKB-KW"/>
</dbReference>
<dbReference type="GO" id="GO:0009055">
    <property type="term" value="F:electron transfer activity"/>
    <property type="evidence" value="ECO:0007669"/>
    <property type="project" value="UniProtKB-UniRule"/>
</dbReference>
<dbReference type="GO" id="GO:0000287">
    <property type="term" value="F:magnesium ion binding"/>
    <property type="evidence" value="ECO:0007669"/>
    <property type="project" value="UniProtKB-UniRule"/>
</dbReference>
<dbReference type="GO" id="GO:0016491">
    <property type="term" value="F:oxidoreductase activity"/>
    <property type="evidence" value="ECO:0007669"/>
    <property type="project" value="UniProtKB-KW"/>
</dbReference>
<dbReference type="GO" id="GO:0015979">
    <property type="term" value="P:photosynthesis"/>
    <property type="evidence" value="ECO:0007669"/>
    <property type="project" value="UniProtKB-UniRule"/>
</dbReference>
<dbReference type="FunFam" id="1.20.1130.10:FF:000001">
    <property type="entry name" value="Photosystem I P700 chlorophyll a apoprotein A2"/>
    <property type="match status" value="1"/>
</dbReference>
<dbReference type="Gene3D" id="1.20.1130.10">
    <property type="entry name" value="Photosystem I PsaA/PsaB"/>
    <property type="match status" value="1"/>
</dbReference>
<dbReference type="HAMAP" id="MF_00482">
    <property type="entry name" value="PSI_PsaB"/>
    <property type="match status" value="1"/>
</dbReference>
<dbReference type="InterPro" id="IPR001280">
    <property type="entry name" value="PSI_PsaA/B"/>
</dbReference>
<dbReference type="InterPro" id="IPR020586">
    <property type="entry name" value="PSI_PsaA/B_CS"/>
</dbReference>
<dbReference type="InterPro" id="IPR036408">
    <property type="entry name" value="PSI_PsaA/B_sf"/>
</dbReference>
<dbReference type="InterPro" id="IPR006244">
    <property type="entry name" value="PSI_PsaB"/>
</dbReference>
<dbReference type="NCBIfam" id="TIGR01336">
    <property type="entry name" value="psaB"/>
    <property type="match status" value="1"/>
</dbReference>
<dbReference type="PANTHER" id="PTHR30128">
    <property type="entry name" value="OUTER MEMBRANE PROTEIN, OMPA-RELATED"/>
    <property type="match status" value="1"/>
</dbReference>
<dbReference type="PANTHER" id="PTHR30128:SF19">
    <property type="entry name" value="PHOTOSYSTEM I P700 CHLOROPHYLL A APOPROTEIN A1-RELATED"/>
    <property type="match status" value="1"/>
</dbReference>
<dbReference type="Pfam" id="PF00223">
    <property type="entry name" value="PsaA_PsaB"/>
    <property type="match status" value="1"/>
</dbReference>
<dbReference type="PIRSF" id="PIRSF002905">
    <property type="entry name" value="PSI_A"/>
    <property type="match status" value="1"/>
</dbReference>
<dbReference type="PRINTS" id="PR00257">
    <property type="entry name" value="PHOTSYSPSAAB"/>
</dbReference>
<dbReference type="SUPFAM" id="SSF81558">
    <property type="entry name" value="Photosystem I subunits PsaA/PsaB"/>
    <property type="match status" value="1"/>
</dbReference>
<dbReference type="PROSITE" id="PS00419">
    <property type="entry name" value="PHOTOSYSTEM_I_PSAAB"/>
    <property type="match status" value="1"/>
</dbReference>
<protein>
    <recommendedName>
        <fullName evidence="1">Photosystem I P700 chlorophyll a apoprotein A2</fullName>
        <ecNumber evidence="1">1.97.1.12</ecNumber>
    </recommendedName>
    <alternativeName>
        <fullName evidence="1">PSI-B</fullName>
    </alternativeName>
    <alternativeName>
        <fullName evidence="1">PsaB</fullName>
    </alternativeName>
</protein>
<reference key="1">
    <citation type="journal article" date="2000" name="Nature">
        <title>Ancestral chloroplast genome in Mesostigma viride reveals an early branch of green plant evolution.</title>
        <authorList>
            <person name="Lemieux C."/>
            <person name="Otis C."/>
            <person name="Turmel M."/>
        </authorList>
    </citation>
    <scope>NUCLEOTIDE SEQUENCE [LARGE SCALE GENOMIC DNA]</scope>
    <source>
        <strain>NIES-296 / KY-14 / CCMP 2046</strain>
    </source>
</reference>